<gene>
    <name type="primary">rbbp4</name>
</gene>
<evidence type="ECO:0000250" key="1"/>
<evidence type="ECO:0000250" key="2">
    <source>
        <dbReference type="UniProtKB" id="O93377"/>
    </source>
</evidence>
<evidence type="ECO:0000250" key="3">
    <source>
        <dbReference type="UniProtKB" id="Q09028"/>
    </source>
</evidence>
<evidence type="ECO:0000305" key="4"/>
<reference key="1">
    <citation type="submission" date="2004-12" db="EMBL/GenBank/DDBJ databases">
        <authorList>
            <consortium name="NIH - Xenopus Gene Collection (XGC) project"/>
        </authorList>
    </citation>
    <scope>NUCLEOTIDE SEQUENCE [LARGE SCALE MRNA]</scope>
    <source>
        <tissue>Embryo</tissue>
    </source>
</reference>
<comment type="function">
    <text evidence="2">Core histone-binding subunit that may target chromatin assembly factors, chromatin remodeling factors and histone deacetylases to their histone substrates in a manner that is regulated by nucleosomal DNA (By similarity). Component of several complexes which regulate chromatin metabolism (By similarity).</text>
</comment>
<comment type="subunit">
    <text evidence="2 3">Binds directly to histone H4, probably via helix 1 of the histone fold, a region that is not accessible when histone H4 is in chromatin (By similarity). Forms a large corepressor complex that contains ncor1, sin3a and possibly sin3b, histone deacetylases hdac2, hdac1, rbbp4 and possibly rbbp7 (By similarity).</text>
</comment>
<comment type="subcellular location">
    <subcellularLocation>
        <location evidence="3">Nucleus</location>
    </subcellularLocation>
    <subcellularLocation>
        <location evidence="3">Chromosome</location>
        <location evidence="3">Telomere</location>
    </subcellularLocation>
</comment>
<comment type="similarity">
    <text evidence="4">Belongs to the WD repeat RBAP46/RBAP48/MSI1 family.</text>
</comment>
<sequence>MADKEAAFDDAVEERVINEEYKIWKKNTPFLYDLVMTHALEWPSLTAQWLPDVTRPDGKDFSIHRLVLGTHTSDEQNHLVIASVQLPNDDAQFDASHYDSEKGEFGGFGSVSGKIEIEIKINHEGEVNRARYMPQNPCIIATKTPSSDVLVFDYTKHPSKPDPSGECNPDLRLRGHQKEGYGLSWNPNLSGNLLSASDDHTICLWDISAVPKEGKVVDAKTIFTGHTAVVEDVSWHLLHESLFGSVADDQKLMIWDTRSNNTSKPSHSVDAHTAEVNCLSFNPYSEFILATGSADKTVALWDLRNLKLKLHSFESHKDEIFQVQWSPHNETILASSGTDRRLNVWDLSKIGEEQSPEDAEDGPPELLFIHGGHTAKISDFSWNPNEPWVICSVSEDNIMQVWQMAENIYNDEDTEGGVDPEGQSS</sequence>
<dbReference type="EMBL" id="BC088588">
    <property type="protein sequence ID" value="AAH88588.1"/>
    <property type="molecule type" value="mRNA"/>
</dbReference>
<dbReference type="SMR" id="Q5M7K4"/>
<dbReference type="FunCoup" id="Q5M7K4">
    <property type="interactions" value="3702"/>
</dbReference>
<dbReference type="STRING" id="8364.ENSXETP00000027073"/>
<dbReference type="InParanoid" id="Q5M7K4"/>
<dbReference type="Proteomes" id="UP000008143">
    <property type="component" value="Unplaced"/>
</dbReference>
<dbReference type="GO" id="GO:0033186">
    <property type="term" value="C:CAF-1 complex"/>
    <property type="evidence" value="ECO:0000250"/>
    <property type="project" value="UniProtKB"/>
</dbReference>
<dbReference type="GO" id="GO:0000781">
    <property type="term" value="C:chromosome, telomeric region"/>
    <property type="evidence" value="ECO:0007669"/>
    <property type="project" value="UniProtKB-SubCell"/>
</dbReference>
<dbReference type="GO" id="GO:0035098">
    <property type="term" value="C:ESC/E(Z) complex"/>
    <property type="evidence" value="ECO:0000250"/>
    <property type="project" value="UniProtKB"/>
</dbReference>
<dbReference type="GO" id="GO:0005634">
    <property type="term" value="C:nucleus"/>
    <property type="evidence" value="ECO:0000250"/>
    <property type="project" value="UniProtKB"/>
</dbReference>
<dbReference type="GO" id="GO:0016581">
    <property type="term" value="C:NuRD complex"/>
    <property type="evidence" value="ECO:0000250"/>
    <property type="project" value="UniProtKB"/>
</dbReference>
<dbReference type="GO" id="GO:0006281">
    <property type="term" value="P:DNA repair"/>
    <property type="evidence" value="ECO:0007669"/>
    <property type="project" value="UniProtKB-KW"/>
</dbReference>
<dbReference type="GO" id="GO:0006260">
    <property type="term" value="P:DNA replication"/>
    <property type="evidence" value="ECO:0007669"/>
    <property type="project" value="UniProtKB-KW"/>
</dbReference>
<dbReference type="GO" id="GO:0006335">
    <property type="term" value="P:DNA replication-dependent chromatin assembly"/>
    <property type="evidence" value="ECO:0000250"/>
    <property type="project" value="UniProtKB"/>
</dbReference>
<dbReference type="FunFam" id="2.130.10.10:FF:000021">
    <property type="entry name" value="histone-binding protein RBBP4 isoform X1"/>
    <property type="match status" value="1"/>
</dbReference>
<dbReference type="Gene3D" id="2.130.10.10">
    <property type="entry name" value="YVTN repeat-like/Quinoprotein amine dehydrogenase"/>
    <property type="match status" value="1"/>
</dbReference>
<dbReference type="InterPro" id="IPR020472">
    <property type="entry name" value="G-protein_beta_WD-40_rep"/>
</dbReference>
<dbReference type="InterPro" id="IPR022052">
    <property type="entry name" value="Histone-bd_RBBP4-like_N"/>
</dbReference>
<dbReference type="InterPro" id="IPR015943">
    <property type="entry name" value="WD40/YVTN_repeat-like_dom_sf"/>
</dbReference>
<dbReference type="InterPro" id="IPR019775">
    <property type="entry name" value="WD40_repeat_CS"/>
</dbReference>
<dbReference type="InterPro" id="IPR036322">
    <property type="entry name" value="WD40_repeat_dom_sf"/>
</dbReference>
<dbReference type="InterPro" id="IPR001680">
    <property type="entry name" value="WD40_rpt"/>
</dbReference>
<dbReference type="InterPro" id="IPR050459">
    <property type="entry name" value="WD_repeat_RBAP46/RBAP48/MSI1"/>
</dbReference>
<dbReference type="PANTHER" id="PTHR22850">
    <property type="entry name" value="WD40 REPEAT FAMILY"/>
    <property type="match status" value="1"/>
</dbReference>
<dbReference type="Pfam" id="PF12265">
    <property type="entry name" value="CAF1C_H4-bd"/>
    <property type="match status" value="1"/>
</dbReference>
<dbReference type="Pfam" id="PF00400">
    <property type="entry name" value="WD40"/>
    <property type="match status" value="5"/>
</dbReference>
<dbReference type="PRINTS" id="PR00320">
    <property type="entry name" value="GPROTEINBRPT"/>
</dbReference>
<dbReference type="SMART" id="SM00320">
    <property type="entry name" value="WD40"/>
    <property type="match status" value="6"/>
</dbReference>
<dbReference type="SUPFAM" id="SSF50978">
    <property type="entry name" value="WD40 repeat-like"/>
    <property type="match status" value="1"/>
</dbReference>
<dbReference type="PROSITE" id="PS00678">
    <property type="entry name" value="WD_REPEATS_1"/>
    <property type="match status" value="3"/>
</dbReference>
<dbReference type="PROSITE" id="PS50082">
    <property type="entry name" value="WD_REPEATS_2"/>
    <property type="match status" value="5"/>
</dbReference>
<dbReference type="PROSITE" id="PS50294">
    <property type="entry name" value="WD_REPEATS_REGION"/>
    <property type="match status" value="1"/>
</dbReference>
<accession>Q5M7K4</accession>
<proteinExistence type="evidence at transcript level"/>
<feature type="initiator methionine" description="Removed" evidence="1">
    <location>
        <position position="1"/>
    </location>
</feature>
<feature type="chain" id="PRO_0000051192" description="Histone-binding protein RBBP4">
    <location>
        <begin position="2"/>
        <end position="425"/>
    </location>
</feature>
<feature type="repeat" description="WD 1" evidence="3">
    <location>
        <begin position="32"/>
        <end position="125"/>
    </location>
</feature>
<feature type="repeat" description="WD 2" evidence="3">
    <location>
        <begin position="126"/>
        <end position="175"/>
    </location>
</feature>
<feature type="repeat" description="WD 3" evidence="3">
    <location>
        <begin position="176"/>
        <end position="223"/>
    </location>
</feature>
<feature type="repeat" description="WD 4" evidence="3">
    <location>
        <begin position="225"/>
        <end position="270"/>
    </location>
</feature>
<feature type="repeat" description="WD 5" evidence="3">
    <location>
        <begin position="271"/>
        <end position="314"/>
    </location>
</feature>
<feature type="repeat" description="WD 6" evidence="3">
    <location>
        <begin position="315"/>
        <end position="371"/>
    </location>
</feature>
<feature type="repeat" description="WD 7" evidence="3">
    <location>
        <begin position="372"/>
        <end position="404"/>
    </location>
</feature>
<feature type="modified residue" description="N-acetylalanine" evidence="1">
    <location>
        <position position="2"/>
    </location>
</feature>
<keyword id="KW-0007">Acetylation</keyword>
<keyword id="KW-0131">Cell cycle</keyword>
<keyword id="KW-0143">Chaperone</keyword>
<keyword id="KW-0156">Chromatin regulator</keyword>
<keyword id="KW-0158">Chromosome</keyword>
<keyword id="KW-0227">DNA damage</keyword>
<keyword id="KW-0234">DNA repair</keyword>
<keyword id="KW-0235">DNA replication</keyword>
<keyword id="KW-0539">Nucleus</keyword>
<keyword id="KW-1185">Reference proteome</keyword>
<keyword id="KW-0677">Repeat</keyword>
<keyword id="KW-0678">Repressor</keyword>
<keyword id="KW-0779">Telomere</keyword>
<keyword id="KW-0804">Transcription</keyword>
<keyword id="KW-0805">Transcription regulation</keyword>
<keyword id="KW-0853">WD repeat</keyword>
<name>RBBP4_XENTR</name>
<protein>
    <recommendedName>
        <fullName>Histone-binding protein RBBP4</fullName>
    </recommendedName>
    <alternativeName>
        <fullName evidence="4">Chromatin assembly factor 1 subunit C</fullName>
        <shortName evidence="4">CAF-1 subunit C</shortName>
    </alternativeName>
    <alternativeName>
        <fullName>Retinoblastoma-binding protein 4</fullName>
        <shortName>RBBP-4</shortName>
    </alternativeName>
</protein>
<organism>
    <name type="scientific">Xenopus tropicalis</name>
    <name type="common">Western clawed frog</name>
    <name type="synonym">Silurana tropicalis</name>
    <dbReference type="NCBI Taxonomy" id="8364"/>
    <lineage>
        <taxon>Eukaryota</taxon>
        <taxon>Metazoa</taxon>
        <taxon>Chordata</taxon>
        <taxon>Craniata</taxon>
        <taxon>Vertebrata</taxon>
        <taxon>Euteleostomi</taxon>
        <taxon>Amphibia</taxon>
        <taxon>Batrachia</taxon>
        <taxon>Anura</taxon>
        <taxon>Pipoidea</taxon>
        <taxon>Pipidae</taxon>
        <taxon>Xenopodinae</taxon>
        <taxon>Xenopus</taxon>
        <taxon>Silurana</taxon>
    </lineage>
</organism>